<keyword id="KW-1003">Cell membrane</keyword>
<keyword id="KW-1015">Disulfide bond</keyword>
<keyword id="KW-0325">Glycoprotein</keyword>
<keyword id="KW-0336">GPI-anchor</keyword>
<keyword id="KW-0449">Lipoprotein</keyword>
<keyword id="KW-0472">Membrane</keyword>
<keyword id="KW-1185">Reference proteome</keyword>
<keyword id="KW-0732">Signal</keyword>
<protein>
    <recommendedName>
        <fullName evidence="8">Early nodulin-like protein 9</fullName>
        <shortName evidence="8">AtENODL9</shortName>
    </recommendedName>
    <alternativeName>
        <fullName evidence="10">Phytocyanin-like protein ENODL9</fullName>
    </alternativeName>
    <alternativeName>
        <fullName evidence="7">Sieve elements-specific ENOD protein</fullName>
    </alternativeName>
</protein>
<gene>
    <name evidence="8" type="primary">ENODL9</name>
    <name evidence="8" type="synonym">EN9</name>
    <name evidence="7" type="synonym">SE-ENOD</name>
    <name evidence="11" type="ordered locus">At3g20570</name>
    <name evidence="12" type="ORF">K10D20.11</name>
</gene>
<accession>Q9LJU1</accession>
<accession>Q8L8L5</accession>
<reference key="1">
    <citation type="journal article" date="2000" name="DNA Res.">
        <title>Structural analysis of Arabidopsis thaliana chromosome 3. II. Sequence features of the 4,251,695 bp regions covered by 90 P1, TAC and BAC clones.</title>
        <authorList>
            <person name="Kaneko T."/>
            <person name="Katoh T."/>
            <person name="Sato S."/>
            <person name="Nakamura Y."/>
            <person name="Asamizu E."/>
            <person name="Tabata S."/>
        </authorList>
    </citation>
    <scope>NUCLEOTIDE SEQUENCE [LARGE SCALE GENOMIC DNA]</scope>
    <source>
        <strain>cv. Columbia</strain>
    </source>
</reference>
<reference key="2">
    <citation type="journal article" date="2017" name="Plant J.">
        <title>Araport11: a complete reannotation of the Arabidopsis thaliana reference genome.</title>
        <authorList>
            <person name="Cheng C.Y."/>
            <person name="Krishnakumar V."/>
            <person name="Chan A.P."/>
            <person name="Thibaud-Nissen F."/>
            <person name="Schobel S."/>
            <person name="Town C.D."/>
        </authorList>
    </citation>
    <scope>GENOME REANNOTATION</scope>
    <source>
        <strain>cv. Columbia</strain>
    </source>
</reference>
<reference key="3">
    <citation type="journal article" date="2003" name="Science">
        <title>Empirical analysis of transcriptional activity in the Arabidopsis genome.</title>
        <authorList>
            <person name="Yamada K."/>
            <person name="Lim J."/>
            <person name="Dale J.M."/>
            <person name="Chen H."/>
            <person name="Shinn P."/>
            <person name="Palm C.J."/>
            <person name="Southwick A.M."/>
            <person name="Wu H.C."/>
            <person name="Kim C.J."/>
            <person name="Nguyen M."/>
            <person name="Pham P.K."/>
            <person name="Cheuk R.F."/>
            <person name="Karlin-Newmann G."/>
            <person name="Liu S.X."/>
            <person name="Lam B."/>
            <person name="Sakano H."/>
            <person name="Wu T."/>
            <person name="Yu G."/>
            <person name="Miranda M."/>
            <person name="Quach H.L."/>
            <person name="Tripp M."/>
            <person name="Chang C.H."/>
            <person name="Lee J.M."/>
            <person name="Toriumi M.J."/>
            <person name="Chan M.M."/>
            <person name="Tang C.C."/>
            <person name="Onodera C.S."/>
            <person name="Deng J.M."/>
            <person name="Akiyama K."/>
            <person name="Ansari Y."/>
            <person name="Arakawa T."/>
            <person name="Banh J."/>
            <person name="Banno F."/>
            <person name="Bowser L."/>
            <person name="Brooks S.Y."/>
            <person name="Carninci P."/>
            <person name="Chao Q."/>
            <person name="Choy N."/>
            <person name="Enju A."/>
            <person name="Goldsmith A.D."/>
            <person name="Gurjal M."/>
            <person name="Hansen N.F."/>
            <person name="Hayashizaki Y."/>
            <person name="Johnson-Hopson C."/>
            <person name="Hsuan V.W."/>
            <person name="Iida K."/>
            <person name="Karnes M."/>
            <person name="Khan S."/>
            <person name="Koesema E."/>
            <person name="Ishida J."/>
            <person name="Jiang P.X."/>
            <person name="Jones T."/>
            <person name="Kawai J."/>
            <person name="Kamiya A."/>
            <person name="Meyers C."/>
            <person name="Nakajima M."/>
            <person name="Narusaka M."/>
            <person name="Seki M."/>
            <person name="Sakurai T."/>
            <person name="Satou M."/>
            <person name="Tamse R."/>
            <person name="Vaysberg M."/>
            <person name="Wallender E.K."/>
            <person name="Wong C."/>
            <person name="Yamamura Y."/>
            <person name="Yuan S."/>
            <person name="Shinozaki K."/>
            <person name="Davis R.W."/>
            <person name="Theologis A."/>
            <person name="Ecker J.R."/>
        </authorList>
    </citation>
    <scope>NUCLEOTIDE SEQUENCE [LARGE SCALE MRNA]</scope>
    <source>
        <strain>cv. Columbia</strain>
    </source>
</reference>
<reference key="4">
    <citation type="submission" date="2006-07" db="EMBL/GenBank/DDBJ databases">
        <title>Large-scale analysis of RIKEN Arabidopsis full-length (RAFL) cDNAs.</title>
        <authorList>
            <person name="Totoki Y."/>
            <person name="Seki M."/>
            <person name="Ishida J."/>
            <person name="Nakajima M."/>
            <person name="Enju A."/>
            <person name="Kamiya A."/>
            <person name="Narusaka M."/>
            <person name="Shin-i T."/>
            <person name="Nakagawa M."/>
            <person name="Sakamoto N."/>
            <person name="Oishi K."/>
            <person name="Kohara Y."/>
            <person name="Kobayashi M."/>
            <person name="Toyoda A."/>
            <person name="Sakaki Y."/>
            <person name="Sakurai T."/>
            <person name="Iida K."/>
            <person name="Akiyama K."/>
            <person name="Satou M."/>
            <person name="Toyoda T."/>
            <person name="Konagaya A."/>
            <person name="Carninci P."/>
            <person name="Kawai J."/>
            <person name="Hayashizaki Y."/>
            <person name="Shinozaki K."/>
        </authorList>
    </citation>
    <scope>NUCLEOTIDE SEQUENCE [LARGE SCALE MRNA]</scope>
    <source>
        <strain>cv. Columbia</strain>
    </source>
</reference>
<reference key="5">
    <citation type="submission" date="2002-03" db="EMBL/GenBank/DDBJ databases">
        <title>Full-length cDNA from Arabidopsis thaliana.</title>
        <authorList>
            <person name="Brover V.V."/>
            <person name="Troukhan M.E."/>
            <person name="Alexandrov N.A."/>
            <person name="Lu Y.-P."/>
            <person name="Flavell R.B."/>
            <person name="Feldmann K.A."/>
        </authorList>
    </citation>
    <scope>NUCLEOTIDE SEQUENCE [LARGE SCALE MRNA]</scope>
</reference>
<reference key="6">
    <citation type="journal article" date="2003" name="Plant Physiol.">
        <title>Identification of glycosylphosphatidylinositol-anchored proteins in Arabidopsis. A proteomic and genomic analysis.</title>
        <authorList>
            <person name="Borner G.H.H."/>
            <person name="Lilley K.S."/>
            <person name="Stevens T.J."/>
            <person name="Dupree P."/>
        </authorList>
    </citation>
    <scope>GENE FAMILY</scope>
    <source>
        <strain>cv. Columbia</strain>
    </source>
</reference>
<reference key="7">
    <citation type="journal article" date="2007" name="Plant Physiol.">
        <title>An early nodulin-like protein accumulates in the sieve element plasma membrane of Arabidopsis.</title>
        <authorList>
            <person name="Khan J.A."/>
            <person name="Wang Q."/>
            <person name="Sjoelund R.D."/>
            <person name="Schulz A."/>
            <person name="Thompson G.A."/>
        </authorList>
    </citation>
    <scope>FUNCTION</scope>
    <scope>DISRUPTION PHENOTYPE</scope>
    <scope>TISSUE SPECIFICITY</scope>
    <scope>SUBCELLULAR LOCATION</scope>
    <scope>DEVELOPMENTAL STAGE</scope>
    <scope>GPI-ANCHOR</scope>
    <source>
        <strain>cv. Columbia</strain>
    </source>
</reference>
<reference key="8">
    <citation type="journal article" date="2009" name="Biosci. Biotechnol. Biochem.">
        <title>Genome-wide identification, structure and expression studies, and mutant collection of 22 early nodulin-like protein genes in Arabidopsis.</title>
        <authorList>
            <person name="Mashiguchi K."/>
            <person name="Asami T."/>
            <person name="Suzuki Y."/>
        </authorList>
    </citation>
    <scope>FUNCTION</scope>
    <scope>DISRUPTION PHENOTYPE</scope>
    <scope>TISSUE SPECIFICITY</scope>
    <scope>GENE FAMILY</scope>
    <scope>NOMENCLATURE</scope>
    <source>
        <strain>cv. Columbia</strain>
    </source>
</reference>
<reference key="9">
    <citation type="journal article" date="2014" name="Plant Cell Physiol.">
        <title>Emerging functions of nodulin-like proteins in non-nodulating plant species.</title>
        <authorList>
            <person name="Denance N."/>
            <person name="Szurek B."/>
            <person name="Noel L.D."/>
        </authorList>
    </citation>
    <scope>REVIEW ON NODULIN-LIKE PROTEINS</scope>
</reference>
<name>ENL09_ARATH</name>
<evidence type="ECO:0000255" key="1"/>
<evidence type="ECO:0000255" key="2">
    <source>
        <dbReference type="PROSITE-ProRule" id="PRU00498"/>
    </source>
</evidence>
<evidence type="ECO:0000255" key="3">
    <source>
        <dbReference type="PROSITE-ProRule" id="PRU00818"/>
    </source>
</evidence>
<evidence type="ECO:0000256" key="4">
    <source>
        <dbReference type="SAM" id="MobiDB-lite"/>
    </source>
</evidence>
<evidence type="ECO:0000269" key="5">
    <source>
    </source>
</evidence>
<evidence type="ECO:0000269" key="6">
    <source>
    </source>
</evidence>
<evidence type="ECO:0000303" key="7">
    <source>
    </source>
</evidence>
<evidence type="ECO:0000303" key="8">
    <source>
    </source>
</evidence>
<evidence type="ECO:0000303" key="9">
    <source>
    </source>
</evidence>
<evidence type="ECO:0000305" key="10"/>
<evidence type="ECO:0000312" key="11">
    <source>
        <dbReference type="Araport" id="AT3G20570"/>
    </source>
</evidence>
<evidence type="ECO:0000312" key="12">
    <source>
        <dbReference type="EMBL" id="BAB01165.1"/>
    </source>
</evidence>
<feature type="signal peptide" evidence="1">
    <location>
        <begin position="1"/>
        <end position="27"/>
    </location>
</feature>
<feature type="chain" id="PRO_5015099836" description="Early nodulin-like protein 9">
    <location>
        <begin position="28"/>
        <end position="180"/>
    </location>
</feature>
<feature type="propeptide" id="PRO_0000457740" description="Removed in mature form" evidence="1">
    <location>
        <begin position="181"/>
        <end position="203"/>
    </location>
</feature>
<feature type="domain" description="Phytocyanin" evidence="3">
    <location>
        <begin position="28"/>
        <end position="130"/>
    </location>
</feature>
<feature type="region of interest" description="Disordered" evidence="4">
    <location>
        <begin position="134"/>
        <end position="181"/>
    </location>
</feature>
<feature type="lipid moiety-binding region" description="GPI-anchor amidated serine" evidence="1">
    <location>
        <position position="180"/>
    </location>
</feature>
<feature type="glycosylation site" description="N-linked (GlcNAc...) asparagine" evidence="2">
    <location>
        <position position="103"/>
    </location>
</feature>
<feature type="disulfide bond" evidence="3">
    <location>
        <begin position="84"/>
        <end position="118"/>
    </location>
</feature>
<feature type="sequence conflict" description="In Ref. 5; AAM67227." evidence="10" ref="5">
    <original>A</original>
    <variation>G</variation>
    <location>
        <position position="181"/>
    </location>
</feature>
<sequence length="203" mass="21510">MARNLKSMMLCGFGLLCFLMIVDRAYAREFTVGGATGWTVPSGSQVYSQWAEQSRFQIGDSLLFVYQSNQDSVLQVTRDAYDSCNTDSPTAKFADGKTSVTLNHSGPYYFISGNKDNCKKNEKLVVIVMADRSGNKNTASSPPSPAPAPSGESAPSPPVSGTFEMTPAPTPTTSEDTPNSAASSLSFVAALLGAALASTLFLH</sequence>
<dbReference type="EMBL" id="AP000410">
    <property type="protein sequence ID" value="BAB01165.1"/>
    <property type="molecule type" value="Genomic_DNA"/>
</dbReference>
<dbReference type="EMBL" id="CP002686">
    <property type="protein sequence ID" value="AEE76399.1"/>
    <property type="molecule type" value="Genomic_DNA"/>
</dbReference>
<dbReference type="EMBL" id="BT009716">
    <property type="protein sequence ID" value="AAP88350.1"/>
    <property type="molecule type" value="mRNA"/>
</dbReference>
<dbReference type="EMBL" id="AK228335">
    <property type="protein sequence ID" value="BAF00275.1"/>
    <property type="molecule type" value="mRNA"/>
</dbReference>
<dbReference type="EMBL" id="AY088921">
    <property type="protein sequence ID" value="AAM67227.1"/>
    <property type="molecule type" value="mRNA"/>
</dbReference>
<dbReference type="RefSeq" id="NP_566665.1">
    <property type="nucleotide sequence ID" value="NM_112949.3"/>
</dbReference>
<dbReference type="SMR" id="Q9LJU1"/>
<dbReference type="FunCoup" id="Q9LJU1">
    <property type="interactions" value="141"/>
</dbReference>
<dbReference type="IntAct" id="Q9LJU1">
    <property type="interactions" value="7"/>
</dbReference>
<dbReference type="STRING" id="3702.Q9LJU1"/>
<dbReference type="GlyGen" id="Q9LJU1">
    <property type="glycosylation" value="3 sites"/>
</dbReference>
<dbReference type="PaxDb" id="3702-AT3G20570.1"/>
<dbReference type="ProteomicsDB" id="185818"/>
<dbReference type="EnsemblPlants" id="AT3G20570.1">
    <property type="protein sequence ID" value="AT3G20570.1"/>
    <property type="gene ID" value="AT3G20570"/>
</dbReference>
<dbReference type="GeneID" id="821604"/>
<dbReference type="Gramene" id="AT3G20570.1">
    <property type="protein sequence ID" value="AT3G20570.1"/>
    <property type="gene ID" value="AT3G20570"/>
</dbReference>
<dbReference type="KEGG" id="ath:AT3G20570"/>
<dbReference type="Araport" id="AT3G20570"/>
<dbReference type="TAIR" id="AT3G20570">
    <property type="gene designation" value="ENODL9"/>
</dbReference>
<dbReference type="eggNOG" id="ENOG502RZQI">
    <property type="taxonomic scope" value="Eukaryota"/>
</dbReference>
<dbReference type="HOGENOM" id="CLU_058719_1_0_1"/>
<dbReference type="InParanoid" id="Q9LJU1"/>
<dbReference type="OMA" id="DWSVPMD"/>
<dbReference type="OrthoDB" id="691587at2759"/>
<dbReference type="PRO" id="PR:Q9LJU1"/>
<dbReference type="Proteomes" id="UP000006548">
    <property type="component" value="Chromosome 3"/>
</dbReference>
<dbReference type="ExpressionAtlas" id="Q9LJU1">
    <property type="expression patterns" value="baseline and differential"/>
</dbReference>
<dbReference type="GO" id="GO:0005886">
    <property type="term" value="C:plasma membrane"/>
    <property type="evidence" value="ECO:0007669"/>
    <property type="project" value="UniProtKB-SubCell"/>
</dbReference>
<dbReference type="GO" id="GO:0098552">
    <property type="term" value="C:side of membrane"/>
    <property type="evidence" value="ECO:0007669"/>
    <property type="project" value="UniProtKB-KW"/>
</dbReference>
<dbReference type="GO" id="GO:0009055">
    <property type="term" value="F:electron transfer activity"/>
    <property type="evidence" value="ECO:0007669"/>
    <property type="project" value="InterPro"/>
</dbReference>
<dbReference type="CDD" id="cd11019">
    <property type="entry name" value="OsENODL1_like"/>
    <property type="match status" value="1"/>
</dbReference>
<dbReference type="FunFam" id="2.60.40.420:FF:000066">
    <property type="entry name" value="Early nodulin-like protein 9"/>
    <property type="match status" value="1"/>
</dbReference>
<dbReference type="Gene3D" id="2.60.40.420">
    <property type="entry name" value="Cupredoxins - blue copper proteins"/>
    <property type="match status" value="1"/>
</dbReference>
<dbReference type="InterPro" id="IPR008972">
    <property type="entry name" value="Cupredoxin"/>
</dbReference>
<dbReference type="InterPro" id="IPR041846">
    <property type="entry name" value="ENL_dom"/>
</dbReference>
<dbReference type="InterPro" id="IPR039391">
    <property type="entry name" value="Phytocyanin-like"/>
</dbReference>
<dbReference type="InterPro" id="IPR003245">
    <property type="entry name" value="Phytocyanin_dom"/>
</dbReference>
<dbReference type="PANTHER" id="PTHR33021">
    <property type="entry name" value="BLUE COPPER PROTEIN"/>
    <property type="match status" value="1"/>
</dbReference>
<dbReference type="PANTHER" id="PTHR33021:SF253">
    <property type="entry name" value="EARLY NODULIN-LIKE PROTEIN 9"/>
    <property type="match status" value="1"/>
</dbReference>
<dbReference type="Pfam" id="PF02298">
    <property type="entry name" value="Cu_bind_like"/>
    <property type="match status" value="1"/>
</dbReference>
<dbReference type="SUPFAM" id="SSF49503">
    <property type="entry name" value="Cupredoxins"/>
    <property type="match status" value="1"/>
</dbReference>
<dbReference type="PROSITE" id="PS51485">
    <property type="entry name" value="PHYTOCYANIN"/>
    <property type="match status" value="1"/>
</dbReference>
<comment type="function">
    <text evidence="5 6 9">May act as a carbohydrate transporter (PubMed:24470637). Mainly required for reproductive functions (PubMed:17293437, PubMed:19897921).</text>
</comment>
<comment type="subcellular location">
    <subcellularLocation>
        <location evidence="5">Cell membrane</location>
        <topology evidence="5">Lipid-anchor</topology>
        <topology evidence="5">GPI-anchor</topology>
    </subcellularLocation>
</comment>
<comment type="tissue specificity">
    <text evidence="5 6">Specifically observed at the plasma membrane of sieve elements in vascular tissues of leaves, stems, roots, flowers and reproductive organs (PubMed:17293437, PubMed:19897921). Absent from companion cells (PubMed:17293437).</text>
</comment>
<comment type="developmental stage">
    <text evidence="5">Accumulates at the earliest stages of sieve element differentiation (PubMed:17293437). In flowers, expressed in the vascular tissue of petals, sepals, stamens and in the gynoecium (PubMed:17293437).</text>
</comment>
<comment type="disruption phenotype">
    <text evidence="5 6">Slight alteration of vegetative growth and reduced overall reproductive potential characterized by delayed bolting and lower number of siliques reduced in size.</text>
</comment>
<comment type="similarity">
    <text evidence="10">Belongs to the early nodulin-like (ENODL) family.</text>
</comment>
<organism>
    <name type="scientific">Arabidopsis thaliana</name>
    <name type="common">Mouse-ear cress</name>
    <dbReference type="NCBI Taxonomy" id="3702"/>
    <lineage>
        <taxon>Eukaryota</taxon>
        <taxon>Viridiplantae</taxon>
        <taxon>Streptophyta</taxon>
        <taxon>Embryophyta</taxon>
        <taxon>Tracheophyta</taxon>
        <taxon>Spermatophyta</taxon>
        <taxon>Magnoliopsida</taxon>
        <taxon>eudicotyledons</taxon>
        <taxon>Gunneridae</taxon>
        <taxon>Pentapetalae</taxon>
        <taxon>rosids</taxon>
        <taxon>malvids</taxon>
        <taxon>Brassicales</taxon>
        <taxon>Brassicaceae</taxon>
        <taxon>Camelineae</taxon>
        <taxon>Arabidopsis</taxon>
    </lineage>
</organism>
<proteinExistence type="evidence at protein level"/>